<keyword id="KW-0025">Alternative splicing</keyword>
<keyword id="KW-0106">Calcium</keyword>
<keyword id="KW-0130">Cell adhesion</keyword>
<keyword id="KW-1003">Cell membrane</keyword>
<keyword id="KW-0325">Glycoprotein</keyword>
<keyword id="KW-0472">Membrane</keyword>
<keyword id="KW-1267">Proteomics identification</keyword>
<keyword id="KW-1185">Reference proteome</keyword>
<keyword id="KW-0677">Repeat</keyword>
<keyword id="KW-0732">Signal</keyword>
<keyword id="KW-0812">Transmembrane</keyword>
<keyword id="KW-1133">Transmembrane helix</keyword>
<dbReference type="EMBL" id="AF152319">
    <property type="protein sequence ID" value="AAD43713.1"/>
    <property type="molecule type" value="mRNA"/>
</dbReference>
<dbReference type="EMBL" id="AF152503">
    <property type="protein sequence ID" value="AAD43764.1"/>
    <property type="molecule type" value="mRNA"/>
</dbReference>
<dbReference type="CCDS" id="CCDS47292.1">
    <molecule id="Q9Y5H3-1"/>
</dbReference>
<dbReference type="CCDS" id="CCDS75343.1">
    <molecule id="Q9Y5H3-2"/>
</dbReference>
<dbReference type="RefSeq" id="NP_061736.1">
    <molecule id="Q9Y5H3-1"/>
    <property type="nucleotide sequence ID" value="NM_018913.3"/>
</dbReference>
<dbReference type="RefSeq" id="NP_114479.1">
    <molecule id="Q9Y5H3-2"/>
    <property type="nucleotide sequence ID" value="NM_032090.2"/>
</dbReference>
<dbReference type="SMR" id="Q9Y5H3"/>
<dbReference type="BioGRID" id="121046">
    <property type="interactions" value="28"/>
</dbReference>
<dbReference type="FunCoup" id="Q9Y5H3">
    <property type="interactions" value="7"/>
</dbReference>
<dbReference type="IntAct" id="Q9Y5H3">
    <property type="interactions" value="15"/>
</dbReference>
<dbReference type="STRING" id="9606.ENSP00000381611"/>
<dbReference type="GlyCosmos" id="Q9Y5H3">
    <property type="glycosylation" value="3 sites, No reported glycans"/>
</dbReference>
<dbReference type="GlyGen" id="Q9Y5H3">
    <property type="glycosylation" value="3 sites"/>
</dbReference>
<dbReference type="iPTMnet" id="Q9Y5H3"/>
<dbReference type="PhosphoSitePlus" id="Q9Y5H3"/>
<dbReference type="BioMuta" id="PCDHGA10"/>
<dbReference type="DMDM" id="37999843"/>
<dbReference type="jPOST" id="Q9Y5H3"/>
<dbReference type="MassIVE" id="Q9Y5H3"/>
<dbReference type="PaxDb" id="9606-ENSP00000381611"/>
<dbReference type="PeptideAtlas" id="Q9Y5H3"/>
<dbReference type="ProteomicsDB" id="86388">
    <molecule id="Q9Y5H3-1"/>
</dbReference>
<dbReference type="ProteomicsDB" id="86389">
    <molecule id="Q9Y5H3-2"/>
</dbReference>
<dbReference type="Antibodypedia" id="57508">
    <property type="antibodies" value="31 antibodies from 8 providers"/>
</dbReference>
<dbReference type="DNASU" id="56106"/>
<dbReference type="Ensembl" id="ENST00000398610.3">
    <molecule id="Q9Y5H3-1"/>
    <property type="protein sequence ID" value="ENSP00000381611.2"/>
    <property type="gene ID" value="ENSG00000253846.3"/>
</dbReference>
<dbReference type="Ensembl" id="ENST00000612503.1">
    <molecule id="Q9Y5H3-2"/>
    <property type="protein sequence ID" value="ENSP00000481157.1"/>
    <property type="gene ID" value="ENSG00000253846.3"/>
</dbReference>
<dbReference type="GeneID" id="56106"/>
<dbReference type="KEGG" id="hsa:56106"/>
<dbReference type="MANE-Select" id="ENST00000398610.3">
    <property type="protein sequence ID" value="ENSP00000381611.2"/>
    <property type="RefSeq nucleotide sequence ID" value="NM_018913.3"/>
    <property type="RefSeq protein sequence ID" value="NP_061736.1"/>
</dbReference>
<dbReference type="UCSC" id="uc003lkl.3">
    <molecule id="Q9Y5H3-1"/>
    <property type="organism name" value="human"/>
</dbReference>
<dbReference type="AGR" id="HGNC:8697"/>
<dbReference type="CTD" id="56106"/>
<dbReference type="DisGeNET" id="56106"/>
<dbReference type="GeneCards" id="PCDHGA10"/>
<dbReference type="HGNC" id="HGNC:8697">
    <property type="gene designation" value="PCDHGA10"/>
</dbReference>
<dbReference type="HPA" id="ENSG00000253846">
    <property type="expression patterns" value="Tissue enriched (brain)"/>
</dbReference>
<dbReference type="MalaCards" id="PCDHGA10"/>
<dbReference type="MIM" id="604968">
    <property type="type" value="gene"/>
</dbReference>
<dbReference type="MIM" id="606297">
    <property type="type" value="gene"/>
</dbReference>
<dbReference type="neXtProt" id="NX_Q9Y5H3"/>
<dbReference type="OpenTargets" id="ENSG00000253846"/>
<dbReference type="PharmGKB" id="PA33045"/>
<dbReference type="VEuPathDB" id="HostDB:ENSG00000253846"/>
<dbReference type="eggNOG" id="KOG3594">
    <property type="taxonomic scope" value="Eukaryota"/>
</dbReference>
<dbReference type="GeneTree" id="ENSGT00940000164213"/>
<dbReference type="HOGENOM" id="CLU_006480_3_0_1"/>
<dbReference type="InParanoid" id="Q9Y5H3"/>
<dbReference type="OMA" id="TEIHFML"/>
<dbReference type="OrthoDB" id="6252479at2759"/>
<dbReference type="PAN-GO" id="Q9Y5H3">
    <property type="GO annotations" value="2 GO annotations based on evolutionary models"/>
</dbReference>
<dbReference type="PhylomeDB" id="Q9Y5H3"/>
<dbReference type="TreeFam" id="TF332299"/>
<dbReference type="PathwayCommons" id="Q9Y5H3"/>
<dbReference type="SIGNOR" id="Q9Y5H3"/>
<dbReference type="BioGRID-ORCS" id="56106">
    <property type="hits" value="7 hits in 1095 CRISPR screens"/>
</dbReference>
<dbReference type="GenomeRNAi" id="56106"/>
<dbReference type="Pharos" id="Q9Y5H3">
    <property type="development level" value="Tdark"/>
</dbReference>
<dbReference type="PRO" id="PR:Q9Y5H3"/>
<dbReference type="Proteomes" id="UP000005640">
    <property type="component" value="Chromosome 5"/>
</dbReference>
<dbReference type="RNAct" id="Q9Y5H3">
    <property type="molecule type" value="protein"/>
</dbReference>
<dbReference type="Bgee" id="ENSG00000253846">
    <property type="expression patterns" value="Expressed in male germ line stem cell (sensu Vertebrata) in testis and 107 other cell types or tissues"/>
</dbReference>
<dbReference type="GO" id="GO:0005886">
    <property type="term" value="C:plasma membrane"/>
    <property type="evidence" value="ECO:0000318"/>
    <property type="project" value="GO_Central"/>
</dbReference>
<dbReference type="GO" id="GO:0005509">
    <property type="term" value="F:calcium ion binding"/>
    <property type="evidence" value="ECO:0007669"/>
    <property type="project" value="InterPro"/>
</dbReference>
<dbReference type="GO" id="GO:0007155">
    <property type="term" value="P:cell adhesion"/>
    <property type="evidence" value="ECO:0000318"/>
    <property type="project" value="GO_Central"/>
</dbReference>
<dbReference type="GO" id="GO:0007156">
    <property type="term" value="P:homophilic cell adhesion via plasma membrane adhesion molecules"/>
    <property type="evidence" value="ECO:0007669"/>
    <property type="project" value="InterPro"/>
</dbReference>
<dbReference type="GO" id="GO:0007399">
    <property type="term" value="P:nervous system development"/>
    <property type="evidence" value="ECO:0007669"/>
    <property type="project" value="UniProtKB-ARBA"/>
</dbReference>
<dbReference type="CDD" id="cd11304">
    <property type="entry name" value="Cadherin_repeat"/>
    <property type="match status" value="6"/>
</dbReference>
<dbReference type="FunFam" id="2.60.40.60:FF:000004">
    <property type="entry name" value="Protocadherin 1 gamma 2"/>
    <property type="match status" value="1"/>
</dbReference>
<dbReference type="FunFam" id="2.60.40.60:FF:000001">
    <property type="entry name" value="Protocadherin alpha 2"/>
    <property type="match status" value="1"/>
</dbReference>
<dbReference type="FunFam" id="2.60.40.60:FF:000002">
    <property type="entry name" value="Protocadherin alpha 2"/>
    <property type="match status" value="1"/>
</dbReference>
<dbReference type="FunFam" id="2.60.40.60:FF:000006">
    <property type="entry name" value="Protocadherin alpha 2"/>
    <property type="match status" value="1"/>
</dbReference>
<dbReference type="FunFam" id="2.60.40.60:FF:000129">
    <property type="entry name" value="protocadherin alpha-C2 isoform X1"/>
    <property type="match status" value="1"/>
</dbReference>
<dbReference type="FunFam" id="2.60.40.60:FF:000018">
    <property type="entry name" value="Protocadherin gamma c3"/>
    <property type="match status" value="1"/>
</dbReference>
<dbReference type="Gene3D" id="2.60.40.60">
    <property type="entry name" value="Cadherins"/>
    <property type="match status" value="6"/>
</dbReference>
<dbReference type="InterPro" id="IPR002126">
    <property type="entry name" value="Cadherin-like_dom"/>
</dbReference>
<dbReference type="InterPro" id="IPR015919">
    <property type="entry name" value="Cadherin-like_sf"/>
</dbReference>
<dbReference type="InterPro" id="IPR032455">
    <property type="entry name" value="Cadherin_C"/>
</dbReference>
<dbReference type="InterPro" id="IPR031904">
    <property type="entry name" value="Cadherin_CBD"/>
</dbReference>
<dbReference type="InterPro" id="IPR020894">
    <property type="entry name" value="Cadherin_CS"/>
</dbReference>
<dbReference type="InterPro" id="IPR013164">
    <property type="entry name" value="Cadherin_N"/>
</dbReference>
<dbReference type="InterPro" id="IPR050174">
    <property type="entry name" value="Protocadherin/Cadherin-CA"/>
</dbReference>
<dbReference type="PANTHER" id="PTHR24028">
    <property type="entry name" value="CADHERIN-87A"/>
    <property type="match status" value="1"/>
</dbReference>
<dbReference type="PANTHER" id="PTHR24028:SF110">
    <property type="entry name" value="PROTOCADHERIN GAMMA-A10"/>
    <property type="match status" value="1"/>
</dbReference>
<dbReference type="Pfam" id="PF00028">
    <property type="entry name" value="Cadherin"/>
    <property type="match status" value="5"/>
</dbReference>
<dbReference type="Pfam" id="PF08266">
    <property type="entry name" value="Cadherin_2"/>
    <property type="match status" value="1"/>
</dbReference>
<dbReference type="Pfam" id="PF16492">
    <property type="entry name" value="Cadherin_C_2"/>
    <property type="match status" value="1"/>
</dbReference>
<dbReference type="Pfam" id="PF15974">
    <property type="entry name" value="Cadherin_tail"/>
    <property type="match status" value="1"/>
</dbReference>
<dbReference type="PRINTS" id="PR00205">
    <property type="entry name" value="CADHERIN"/>
</dbReference>
<dbReference type="SMART" id="SM00112">
    <property type="entry name" value="CA"/>
    <property type="match status" value="6"/>
</dbReference>
<dbReference type="SUPFAM" id="SSF49313">
    <property type="entry name" value="Cadherin-like"/>
    <property type="match status" value="6"/>
</dbReference>
<dbReference type="PROSITE" id="PS00232">
    <property type="entry name" value="CADHERIN_1"/>
    <property type="match status" value="5"/>
</dbReference>
<dbReference type="PROSITE" id="PS50268">
    <property type="entry name" value="CADHERIN_2"/>
    <property type="match status" value="6"/>
</dbReference>
<gene>
    <name type="primary">PCDHGA10</name>
</gene>
<protein>
    <recommendedName>
        <fullName>Protocadherin gamma-A10</fullName>
        <shortName>PCDH-gamma-A10</shortName>
    </recommendedName>
</protein>
<evidence type="ECO:0000250" key="1"/>
<evidence type="ECO:0000255" key="2"/>
<evidence type="ECO:0000255" key="3">
    <source>
        <dbReference type="PROSITE-ProRule" id="PRU00043"/>
    </source>
</evidence>
<evidence type="ECO:0000256" key="4">
    <source>
        <dbReference type="SAM" id="MobiDB-lite"/>
    </source>
</evidence>
<evidence type="ECO:0000269" key="5">
    <source>
    </source>
</evidence>
<evidence type="ECO:0000303" key="6">
    <source>
    </source>
</evidence>
<comment type="function">
    <text>Potential calcium-dependent cell-adhesion protein. May be involved in the establishment and maintenance of specific neuronal connections in the brain.</text>
</comment>
<comment type="subcellular location">
    <subcellularLocation>
        <location evidence="1">Cell membrane</location>
        <topology evidence="1">Single-pass type I membrane protein</topology>
    </subcellularLocation>
</comment>
<comment type="alternative products">
    <event type="alternative splicing"/>
    <isoform>
        <id>Q9Y5H3-1</id>
        <name>1</name>
        <sequence type="displayed"/>
    </isoform>
    <isoform>
        <id>Q9Y5H3-2</id>
        <name>2</name>
        <name>Short</name>
        <sequence type="described" ref="VSP_008677 VSP_008678"/>
    </isoform>
</comment>
<feature type="signal peptide" evidence="2">
    <location>
        <begin position="1"/>
        <end position="32"/>
    </location>
</feature>
<feature type="chain" id="PRO_0000003966" description="Protocadherin gamma-A10">
    <location>
        <begin position="33"/>
        <end position="936"/>
    </location>
</feature>
<feature type="topological domain" description="Extracellular" evidence="2">
    <location>
        <begin position="33"/>
        <end position="696"/>
    </location>
</feature>
<feature type="transmembrane region" description="Helical" evidence="2">
    <location>
        <begin position="697"/>
        <end position="717"/>
    </location>
</feature>
<feature type="topological domain" description="Cytoplasmic" evidence="2">
    <location>
        <begin position="718"/>
        <end position="936"/>
    </location>
</feature>
<feature type="domain" description="Cadherin 1" evidence="3">
    <location>
        <begin position="33"/>
        <end position="137"/>
    </location>
</feature>
<feature type="domain" description="Cadherin 2" evidence="3">
    <location>
        <begin position="138"/>
        <end position="246"/>
    </location>
</feature>
<feature type="domain" description="Cadherin 3" evidence="3">
    <location>
        <begin position="247"/>
        <end position="351"/>
    </location>
</feature>
<feature type="domain" description="Cadherin 4" evidence="3">
    <location>
        <begin position="352"/>
        <end position="456"/>
    </location>
</feature>
<feature type="domain" description="Cadherin 5" evidence="3">
    <location>
        <begin position="457"/>
        <end position="566"/>
    </location>
</feature>
<feature type="domain" description="Cadherin 6" evidence="3">
    <location>
        <begin position="574"/>
        <end position="687"/>
    </location>
</feature>
<feature type="region of interest" description="Disordered" evidence="4">
    <location>
        <begin position="806"/>
        <end position="845"/>
    </location>
</feature>
<feature type="region of interest" description="Disordered" evidence="4">
    <location>
        <begin position="906"/>
        <end position="936"/>
    </location>
</feature>
<feature type="compositionally biased region" description="Polar residues" evidence="4">
    <location>
        <begin position="820"/>
        <end position="845"/>
    </location>
</feature>
<feature type="compositionally biased region" description="Basic residues" evidence="4">
    <location>
        <begin position="926"/>
        <end position="936"/>
    </location>
</feature>
<feature type="glycosylation site" description="N-linked (GlcNAc...) asparagine" evidence="2">
    <location>
        <position position="51"/>
    </location>
</feature>
<feature type="glycosylation site" description="N-linked (GlcNAc...) asparagine" evidence="2">
    <location>
        <position position="423"/>
    </location>
</feature>
<feature type="glycosylation site" description="N-linked (GlcNAc...) asparagine" evidence="2">
    <location>
        <position position="549"/>
    </location>
</feature>
<feature type="splice variant" id="VSP_008677" description="In isoform 2." evidence="6">
    <original>QAPPNTDWRFSQAQRPGTSGSQNGDDTGTWPNNQFDTE</original>
    <variation>VSFIFIFTFVKKKKIGFYFEVCGMMVESVNAKTLMSRI</variation>
    <location>
        <begin position="813"/>
        <end position="850"/>
    </location>
</feature>
<feature type="splice variant" id="VSP_008678" description="In isoform 2." evidence="6">
    <location>
        <begin position="851"/>
        <end position="936"/>
    </location>
</feature>
<feature type="sequence variant" id="VAR_048566" description="In dbSNP:rs4912751.">
    <original>I</original>
    <variation>V</variation>
    <location>
        <position position="89"/>
    </location>
</feature>
<feature type="sequence variant" id="VAR_084654" description="Found in a patient with intellectual disability; uncertain significance." evidence="5">
    <original>E</original>
    <variation>K</variation>
    <location>
        <position position="275"/>
    </location>
</feature>
<feature type="sequence variant" id="VAR_048567" description="In dbSNP:rs11575963.">
    <original>S</original>
    <variation>P</variation>
    <location>
        <position position="796"/>
    </location>
</feature>
<sequence length="936" mass="101447">MAAQRNRSKESKDCSGLVLLCLFFGIPWEAGARQISYSIPEELEKGSFVGNISKDLGLAPRELAERGVRIVSRGRTQLFSLNPRSGSLITAGRIDREELCAQSARCVVSFNILVEDRVKLFGIEIEVTDINDNAPKFQAENLDVKINENVAAGMRFPLPEAIDPDVGVNSLQSYQLSPNKHFSLRVQSRANGVKYPELVLEHSLDREEEAIHHLVLTASDGGDPLRSGTVLVSVTVFDANDNAPVFTLPEYRVSVPENLPVGTQLLTVTATDRDEGANGEVTYSFRKLPDTQLLKFQLNKYTGEIKISENLDYEETGFYEIEIQAEDGGAYLATAKVLITVEDVNDNSPELTITSLFSPVTEDSPLGTVVALLNVHDLDSEQNGQVTCSILAYLPFKLEKSIDSYYRLVIHRALDREQVSSYNITVTATDGGSPPLSTEAHFMLQVADINDNPPTFSQVSYFTYIPENNARGASIFSVTALDPDSKENAQIIYSLAEDTIQGVPLSSYISINSDTGVLYALRSFDYEQFHELQMQVTASDSGDPPLSSNVSLSLFVLDQNDNAPEILYPALPTDGSTGVELAPRSAEPGYLVTKVVAVDRDSGQNAWLSYRLLKASEPGLFAVGEHTGEVRTARALLDRDALKQSLVVAVQDHGQPPLSATVTLTVAVADSIPQVLADLGSFESPANSETSDLTLYLVVAVAAVSCVFLAFVIVLLAHRLRRWHKSRLLQASGGGLTGVSGSHFVGVDGVRAFLQTYSHEVSLTADSRKSHLIFPQPNYADTLISQESCEKNDPLSLLDDSKFPIEDTPLVPQAPPNTDWRFSQAQRPGTSGSQNGDDTGTWPNNQFDTEMLQAMILASASEAADGSSTLGGGAGTMGLSARYGPQFTLQHVPDYRQNVYIPGSNATLTNAAGKRDGKAPAGGNGNKKKSGKKEKK</sequence>
<reference key="1">
    <citation type="journal article" date="1999" name="Cell">
        <title>A striking organization of a large family of human neural cadherin-like cell adhesion genes.</title>
        <authorList>
            <person name="Wu Q."/>
            <person name="Maniatis T."/>
        </authorList>
    </citation>
    <scope>NUCLEOTIDE SEQUENCE [MRNA] (ISOFORMS 1 AND 2)</scope>
    <source>
        <tissue>Brain</tissue>
    </source>
</reference>
<reference key="2">
    <citation type="journal article" date="2017" name="Hum. Genet.">
        <title>Expanding the genetic heterogeneity of intellectual disability.</title>
        <authorList>
            <person name="Anazi S."/>
            <person name="Maddirevula S."/>
            <person name="Salpietro V."/>
            <person name="Asi Y.T."/>
            <person name="Alsahli S."/>
            <person name="Alhashem A."/>
            <person name="Shamseldin H.E."/>
            <person name="AlZahrani F."/>
            <person name="Patel N."/>
            <person name="Ibrahim N."/>
            <person name="Abdulwahab F.M."/>
            <person name="Hashem M."/>
            <person name="Alhashmi N."/>
            <person name="Al Murshedi F."/>
            <person name="Al Kindy A."/>
            <person name="Alshaer A."/>
            <person name="Rumayyan A."/>
            <person name="Al Tala S."/>
            <person name="Kurdi W."/>
            <person name="Alsaman A."/>
            <person name="Alasmari A."/>
            <person name="Banu S."/>
            <person name="Sultan T."/>
            <person name="Saleh M.M."/>
            <person name="Alkuraya H."/>
            <person name="Salih M.A."/>
            <person name="Aldhalaan H."/>
            <person name="Ben-Omran T."/>
            <person name="Al Musafri F."/>
            <person name="Ali R."/>
            <person name="Suleiman J."/>
            <person name="Tabarki B."/>
            <person name="El-Hattab A.W."/>
            <person name="Bupp C."/>
            <person name="Alfadhel M."/>
            <person name="Al Tassan N."/>
            <person name="Monies D."/>
            <person name="Arold S.T."/>
            <person name="Abouelhoda M."/>
            <person name="Lashley T."/>
            <person name="Houlden H."/>
            <person name="Faqeih E."/>
            <person name="Alkuraya F.S."/>
        </authorList>
    </citation>
    <scope>VARIANT LYS-275</scope>
</reference>
<reference key="3">
    <citation type="journal article" date="2018" name="Hum. Genet.">
        <title>Correction to: Expanding the genetic heterogeneity of intellectual disability.</title>
        <authorList>
            <person name="Anazi S."/>
            <person name="Maddirevula S."/>
            <person name="Salpietro V."/>
            <person name="Asi Y.T."/>
            <person name="Alsahli S."/>
            <person name="Alhashem A."/>
            <person name="Shamseldin H.E."/>
            <person name="AlZahrani F."/>
            <person name="Patel N."/>
            <person name="Ibrahim N."/>
            <person name="Abdulwahab F.M."/>
            <person name="Hashem M."/>
            <person name="Alhashmi N."/>
            <person name="Al Murshedi F."/>
            <person name="Al Kindy A."/>
            <person name="Alshaer A."/>
            <person name="Rumayyan A."/>
            <person name="Al Tala S."/>
            <person name="Kurdi W."/>
            <person name="Alsaman A."/>
            <person name="Alasmari A."/>
            <person name="Banu S."/>
            <person name="Sultan T."/>
            <person name="Saleh M.M."/>
            <person name="Alkuraya H."/>
            <person name="Salih M.A."/>
            <person name="Aldhalaan H."/>
            <person name="Ben-Omran T."/>
            <person name="Al Musafri F."/>
            <person name="Ali R."/>
            <person name="Suleiman J."/>
            <person name="Tabarki B."/>
            <person name="El-Hattab A.W."/>
            <person name="Bupp C."/>
            <person name="Alfadhel M."/>
            <person name="Al Tassan N."/>
            <person name="Monies D."/>
            <person name="Arold S.T."/>
            <person name="Abouelhoda M."/>
            <person name="Lashley T."/>
            <person name="Houlden H."/>
            <person name="Faqeih E."/>
            <person name="Alkuraya F.S."/>
        </authorList>
    </citation>
    <scope>ERRATUM OF PUBMED:28940097</scope>
</reference>
<accession>Q9Y5H3</accession>
<accession>Q9Y5E0</accession>
<proteinExistence type="evidence at protein level"/>
<organism>
    <name type="scientific">Homo sapiens</name>
    <name type="common">Human</name>
    <dbReference type="NCBI Taxonomy" id="9606"/>
    <lineage>
        <taxon>Eukaryota</taxon>
        <taxon>Metazoa</taxon>
        <taxon>Chordata</taxon>
        <taxon>Craniata</taxon>
        <taxon>Vertebrata</taxon>
        <taxon>Euteleostomi</taxon>
        <taxon>Mammalia</taxon>
        <taxon>Eutheria</taxon>
        <taxon>Euarchontoglires</taxon>
        <taxon>Primates</taxon>
        <taxon>Haplorrhini</taxon>
        <taxon>Catarrhini</taxon>
        <taxon>Hominidae</taxon>
        <taxon>Homo</taxon>
    </lineage>
</organism>
<name>PCDGA_HUMAN</name>